<sequence length="562" mass="60425">MNINVADLLNGNYILLLFVVLSLGLCLGKLRLGPVQLGNSIGVLVVSLLLGQQHFSINTEALSLGFMLFIFCVGVEAGPNFFSIFFRDGKNYFMLALVMVGSAMLLALGLGKLFGWGIGLTAGMLAGSMTSTPVLVGAGDTLRNTASLGGQLGVEQDHLSLGYALTYLVGLVSLIFGARYLPKLQHQDLPTSAQQIARERGLDVDSQRKVYLPVIRAYRVGPELVDWAAGKNLRELGIYRQTGCYIERIRRNGILANPDGDAVLQIGDEIALVGYPDAHSRLNSNFRDGKEVFDRNLLDMRIVTEEIVVKNHNAVGKRLSQLKLTDHGCFLNRIVRSQIEMPLDDNVVLNKGDVLQVSGDARRVKSIAERIGFISIHSQVTDLLAFCAFFVIGVMVGLITIQFSNFTFGIGNAAGLLFAGIMLGFLRANHPTFGYIPQGALNMVKEFGLMVFMAGVGLSAGSTINSSLGEVGIQMLASGLIVSLVPVVICFLFGAYVLKMNRALLFGAMMGARTCAPAMEIISDTARSNIPALGYAGTYAIANVLLTLAGSLIVVIWPELPG</sequence>
<feature type="chain" id="PRO_0000208785" description="Putative transport protein ECA2683">
    <location>
        <begin position="1"/>
        <end position="562"/>
    </location>
</feature>
<feature type="transmembrane region" description="Helical" evidence="1">
    <location>
        <begin position="8"/>
        <end position="28"/>
    </location>
</feature>
<feature type="transmembrane region" description="Helical" evidence="1">
    <location>
        <begin position="32"/>
        <end position="52"/>
    </location>
</feature>
<feature type="transmembrane region" description="Helical" evidence="1">
    <location>
        <begin position="66"/>
        <end position="86"/>
    </location>
</feature>
<feature type="transmembrane region" description="Helical" evidence="1">
    <location>
        <begin position="93"/>
        <end position="113"/>
    </location>
</feature>
<feature type="transmembrane region" description="Helical" evidence="1">
    <location>
        <begin position="116"/>
        <end position="136"/>
    </location>
</feature>
<feature type="transmembrane region" description="Helical" evidence="1">
    <location>
        <begin position="158"/>
        <end position="178"/>
    </location>
</feature>
<feature type="transmembrane region" description="Helical" evidence="1">
    <location>
        <begin position="383"/>
        <end position="403"/>
    </location>
</feature>
<feature type="transmembrane region" description="Helical" evidence="1">
    <location>
        <begin position="406"/>
        <end position="426"/>
    </location>
</feature>
<feature type="transmembrane region" description="Helical" evidence="1">
    <location>
        <begin position="447"/>
        <end position="467"/>
    </location>
</feature>
<feature type="transmembrane region" description="Helical" evidence="1">
    <location>
        <begin position="478"/>
        <end position="498"/>
    </location>
</feature>
<feature type="transmembrane region" description="Helical" evidence="1">
    <location>
        <begin position="537"/>
        <end position="557"/>
    </location>
</feature>
<feature type="domain" description="RCK C-terminal 1" evidence="1">
    <location>
        <begin position="202"/>
        <end position="288"/>
    </location>
</feature>
<feature type="domain" description="RCK C-terminal 2" evidence="1">
    <location>
        <begin position="290"/>
        <end position="373"/>
    </location>
</feature>
<keyword id="KW-1003">Cell membrane</keyword>
<keyword id="KW-0472">Membrane</keyword>
<keyword id="KW-1185">Reference proteome</keyword>
<keyword id="KW-0677">Repeat</keyword>
<keyword id="KW-0812">Transmembrane</keyword>
<keyword id="KW-1133">Transmembrane helix</keyword>
<keyword id="KW-0813">Transport</keyword>
<protein>
    <recommendedName>
        <fullName evidence="1">Putative transport protein ECA2683</fullName>
    </recommendedName>
</protein>
<dbReference type="EMBL" id="BX950851">
    <property type="protein sequence ID" value="CAG75583.1"/>
    <property type="molecule type" value="Genomic_DNA"/>
</dbReference>
<dbReference type="RefSeq" id="WP_011094224.1">
    <property type="nucleotide sequence ID" value="NC_004547.2"/>
</dbReference>
<dbReference type="SMR" id="Q6D3R1"/>
<dbReference type="STRING" id="218491.ECA2683"/>
<dbReference type="KEGG" id="eca:ECA2683"/>
<dbReference type="PATRIC" id="fig|218491.5.peg.2718"/>
<dbReference type="eggNOG" id="COG0569">
    <property type="taxonomic scope" value="Bacteria"/>
</dbReference>
<dbReference type="eggNOG" id="COG2985">
    <property type="taxonomic scope" value="Bacteria"/>
</dbReference>
<dbReference type="HOGENOM" id="CLU_035023_2_2_6"/>
<dbReference type="OrthoDB" id="5166626at2"/>
<dbReference type="Proteomes" id="UP000007966">
    <property type="component" value="Chromosome"/>
</dbReference>
<dbReference type="GO" id="GO:0005886">
    <property type="term" value="C:plasma membrane"/>
    <property type="evidence" value="ECO:0007669"/>
    <property type="project" value="UniProtKB-SubCell"/>
</dbReference>
<dbReference type="GO" id="GO:0008324">
    <property type="term" value="F:monoatomic cation transmembrane transporter activity"/>
    <property type="evidence" value="ECO:0007669"/>
    <property type="project" value="InterPro"/>
</dbReference>
<dbReference type="GO" id="GO:0006813">
    <property type="term" value="P:potassium ion transport"/>
    <property type="evidence" value="ECO:0007669"/>
    <property type="project" value="InterPro"/>
</dbReference>
<dbReference type="Gene3D" id="3.30.70.1450">
    <property type="entry name" value="Regulator of K+ conductance, C-terminal domain"/>
    <property type="match status" value="2"/>
</dbReference>
<dbReference type="HAMAP" id="MF_01015">
    <property type="entry name" value="YbjL"/>
    <property type="match status" value="1"/>
</dbReference>
<dbReference type="InterPro" id="IPR050144">
    <property type="entry name" value="AAE_transporter"/>
</dbReference>
<dbReference type="InterPro" id="IPR006037">
    <property type="entry name" value="RCK_C"/>
</dbReference>
<dbReference type="InterPro" id="IPR036721">
    <property type="entry name" value="RCK_C_sf"/>
</dbReference>
<dbReference type="InterPro" id="IPR023017">
    <property type="entry name" value="Transp_YbjL_put"/>
</dbReference>
<dbReference type="InterPro" id="IPR006512">
    <property type="entry name" value="YidE_YbjL"/>
</dbReference>
<dbReference type="NCBIfam" id="NF003440">
    <property type="entry name" value="PRK04972.1"/>
    <property type="match status" value="1"/>
</dbReference>
<dbReference type="NCBIfam" id="TIGR01625">
    <property type="entry name" value="YidE_YbjL_dupl"/>
    <property type="match status" value="2"/>
</dbReference>
<dbReference type="PANTHER" id="PTHR30445">
    <property type="entry name" value="K(+)_H(+) ANTIPORTER SUBUNIT KHTT"/>
    <property type="match status" value="1"/>
</dbReference>
<dbReference type="PANTHER" id="PTHR30445:SF10">
    <property type="entry name" value="TRANSPORT PROTEIN YBJL-RELATED"/>
    <property type="match status" value="1"/>
</dbReference>
<dbReference type="Pfam" id="PF06826">
    <property type="entry name" value="Asp-Al_Ex"/>
    <property type="match status" value="2"/>
</dbReference>
<dbReference type="Pfam" id="PF02080">
    <property type="entry name" value="TrkA_C"/>
    <property type="match status" value="2"/>
</dbReference>
<dbReference type="SUPFAM" id="SSF116726">
    <property type="entry name" value="TrkA C-terminal domain-like"/>
    <property type="match status" value="2"/>
</dbReference>
<dbReference type="PROSITE" id="PS51202">
    <property type="entry name" value="RCK_C"/>
    <property type="match status" value="2"/>
</dbReference>
<evidence type="ECO:0000255" key="1">
    <source>
        <dbReference type="HAMAP-Rule" id="MF_01015"/>
    </source>
</evidence>
<proteinExistence type="inferred from homology"/>
<organism>
    <name type="scientific">Pectobacterium atrosepticum (strain SCRI 1043 / ATCC BAA-672)</name>
    <name type="common">Erwinia carotovora subsp. atroseptica</name>
    <dbReference type="NCBI Taxonomy" id="218491"/>
    <lineage>
        <taxon>Bacteria</taxon>
        <taxon>Pseudomonadati</taxon>
        <taxon>Pseudomonadota</taxon>
        <taxon>Gammaproteobacteria</taxon>
        <taxon>Enterobacterales</taxon>
        <taxon>Pectobacteriaceae</taxon>
        <taxon>Pectobacterium</taxon>
    </lineage>
</organism>
<gene>
    <name type="ordered locus">ECA2683</name>
</gene>
<reference key="1">
    <citation type="journal article" date="2004" name="Proc. Natl. Acad. Sci. U.S.A.">
        <title>Genome sequence of the enterobacterial phytopathogen Erwinia carotovora subsp. atroseptica and characterization of virulence factors.</title>
        <authorList>
            <person name="Bell K.S."/>
            <person name="Sebaihia M."/>
            <person name="Pritchard L."/>
            <person name="Holden M.T.G."/>
            <person name="Hyman L.J."/>
            <person name="Holeva M.C."/>
            <person name="Thomson N.R."/>
            <person name="Bentley S.D."/>
            <person name="Churcher L.J.C."/>
            <person name="Mungall K."/>
            <person name="Atkin R."/>
            <person name="Bason N."/>
            <person name="Brooks K."/>
            <person name="Chillingworth T."/>
            <person name="Clark K."/>
            <person name="Doggett J."/>
            <person name="Fraser A."/>
            <person name="Hance Z."/>
            <person name="Hauser H."/>
            <person name="Jagels K."/>
            <person name="Moule S."/>
            <person name="Norbertczak H."/>
            <person name="Ormond D."/>
            <person name="Price C."/>
            <person name="Quail M.A."/>
            <person name="Sanders M."/>
            <person name="Walker D."/>
            <person name="Whitehead S."/>
            <person name="Salmond G.P.C."/>
            <person name="Birch P.R.J."/>
            <person name="Parkhill J."/>
            <person name="Toth I.K."/>
        </authorList>
    </citation>
    <scope>NUCLEOTIDE SEQUENCE [LARGE SCALE GENOMIC DNA]</scope>
    <source>
        <strain>SCRI 1043 / ATCC BAA-672</strain>
    </source>
</reference>
<comment type="subcellular location">
    <subcellularLocation>
        <location evidence="1">Cell membrane</location>
        <topology evidence="1">Multi-pass membrane protein</topology>
    </subcellularLocation>
</comment>
<comment type="similarity">
    <text evidence="1">Belongs to the AAE transporter (TC 2.A.81) family. YbjL subfamily.</text>
</comment>
<accession>Q6D3R1</accession>
<name>Y2683_PECAS</name>